<proteinExistence type="inferred from homology"/>
<protein>
    <recommendedName>
        <fullName evidence="1">Taurine import ATP-binding protein TauB</fullName>
        <ecNumber evidence="1">7.6.2.7</ecNumber>
    </recommendedName>
</protein>
<sequence>MLNVSGLWAEYQGKPALQDVSLQIASGQLVVVLGPSGCGKTTLLNLIAGFMTPSAGVITLDNIPVSGPSAERGVVFQNEGLLPWRDVVSNVEFGLQLAGMSKEQRRVTALKMLNRVGLAGFEHHFIWQLSGGMRQRVGIARALAVDPRLLLLDEPFGALDAFTREQMQELLLTIWRDTGKQILLITHDIEEAVFLASELLLLSPGPGQVVERLSLNFGQRYAEGEPCRAIKSDPEFIARREDVLGKVFQQREVLI</sequence>
<dbReference type="EC" id="7.6.2.7" evidence="1"/>
<dbReference type="EMBL" id="CP000308">
    <property type="protein sequence ID" value="ABG15251.1"/>
    <property type="molecule type" value="Genomic_DNA"/>
</dbReference>
<dbReference type="RefSeq" id="WP_002212307.1">
    <property type="nucleotide sequence ID" value="NZ_CP009906.1"/>
</dbReference>
<dbReference type="SMR" id="Q1C2S1"/>
<dbReference type="GeneID" id="57974419"/>
<dbReference type="KEGG" id="ypa:YPA_3289"/>
<dbReference type="Proteomes" id="UP000001971">
    <property type="component" value="Chromosome"/>
</dbReference>
<dbReference type="GO" id="GO:0005886">
    <property type="term" value="C:plasma membrane"/>
    <property type="evidence" value="ECO:0007669"/>
    <property type="project" value="UniProtKB-SubCell"/>
</dbReference>
<dbReference type="GO" id="GO:0015411">
    <property type="term" value="F:ABC-type taurine transporter transporter activity"/>
    <property type="evidence" value="ECO:0007669"/>
    <property type="project" value="UniProtKB-EC"/>
</dbReference>
<dbReference type="GO" id="GO:0005524">
    <property type="term" value="F:ATP binding"/>
    <property type="evidence" value="ECO:0007669"/>
    <property type="project" value="UniProtKB-KW"/>
</dbReference>
<dbReference type="GO" id="GO:0016887">
    <property type="term" value="F:ATP hydrolysis activity"/>
    <property type="evidence" value="ECO:0007669"/>
    <property type="project" value="InterPro"/>
</dbReference>
<dbReference type="CDD" id="cd03293">
    <property type="entry name" value="ABC_NrtD_SsuB_transporters"/>
    <property type="match status" value="1"/>
</dbReference>
<dbReference type="Gene3D" id="3.40.50.300">
    <property type="entry name" value="P-loop containing nucleotide triphosphate hydrolases"/>
    <property type="match status" value="1"/>
</dbReference>
<dbReference type="InterPro" id="IPR003593">
    <property type="entry name" value="AAA+_ATPase"/>
</dbReference>
<dbReference type="InterPro" id="IPR003439">
    <property type="entry name" value="ABC_transporter-like_ATP-bd"/>
</dbReference>
<dbReference type="InterPro" id="IPR017871">
    <property type="entry name" value="ABC_transporter-like_CS"/>
</dbReference>
<dbReference type="InterPro" id="IPR050166">
    <property type="entry name" value="ABC_transporter_ATP-bind"/>
</dbReference>
<dbReference type="InterPro" id="IPR027417">
    <property type="entry name" value="P-loop_NTPase"/>
</dbReference>
<dbReference type="NCBIfam" id="NF008421">
    <property type="entry name" value="PRK11248.1"/>
    <property type="match status" value="1"/>
</dbReference>
<dbReference type="PANTHER" id="PTHR42788:SF18">
    <property type="entry name" value="TAURINE IMPORT ATP-BINDING PROTEIN TAUB"/>
    <property type="match status" value="1"/>
</dbReference>
<dbReference type="PANTHER" id="PTHR42788">
    <property type="entry name" value="TAURINE IMPORT ATP-BINDING PROTEIN-RELATED"/>
    <property type="match status" value="1"/>
</dbReference>
<dbReference type="Pfam" id="PF00005">
    <property type="entry name" value="ABC_tran"/>
    <property type="match status" value="1"/>
</dbReference>
<dbReference type="SMART" id="SM00382">
    <property type="entry name" value="AAA"/>
    <property type="match status" value="1"/>
</dbReference>
<dbReference type="SUPFAM" id="SSF52540">
    <property type="entry name" value="P-loop containing nucleoside triphosphate hydrolases"/>
    <property type="match status" value="1"/>
</dbReference>
<dbReference type="PROSITE" id="PS00211">
    <property type="entry name" value="ABC_TRANSPORTER_1"/>
    <property type="match status" value="1"/>
</dbReference>
<dbReference type="PROSITE" id="PS50893">
    <property type="entry name" value="ABC_TRANSPORTER_2"/>
    <property type="match status" value="1"/>
</dbReference>
<dbReference type="PROSITE" id="PS51250">
    <property type="entry name" value="TAUB"/>
    <property type="match status" value="1"/>
</dbReference>
<accession>Q1C2S1</accession>
<keyword id="KW-0067">ATP-binding</keyword>
<keyword id="KW-0997">Cell inner membrane</keyword>
<keyword id="KW-1003">Cell membrane</keyword>
<keyword id="KW-0472">Membrane</keyword>
<keyword id="KW-0547">Nucleotide-binding</keyword>
<keyword id="KW-1278">Translocase</keyword>
<keyword id="KW-0813">Transport</keyword>
<reference key="1">
    <citation type="journal article" date="2006" name="J. Bacteriol.">
        <title>Complete genome sequence of Yersinia pestis strains Antiqua and Nepal516: evidence of gene reduction in an emerging pathogen.</title>
        <authorList>
            <person name="Chain P.S.G."/>
            <person name="Hu P."/>
            <person name="Malfatti S.A."/>
            <person name="Radnedge L."/>
            <person name="Larimer F."/>
            <person name="Vergez L.M."/>
            <person name="Worsham P."/>
            <person name="Chu M.C."/>
            <person name="Andersen G.L."/>
        </authorList>
    </citation>
    <scope>NUCLEOTIDE SEQUENCE [LARGE SCALE GENOMIC DNA]</scope>
    <source>
        <strain>Antiqua</strain>
    </source>
</reference>
<organism>
    <name type="scientific">Yersinia pestis bv. Antiqua (strain Antiqua)</name>
    <dbReference type="NCBI Taxonomy" id="360102"/>
    <lineage>
        <taxon>Bacteria</taxon>
        <taxon>Pseudomonadati</taxon>
        <taxon>Pseudomonadota</taxon>
        <taxon>Gammaproteobacteria</taxon>
        <taxon>Enterobacterales</taxon>
        <taxon>Yersiniaceae</taxon>
        <taxon>Yersinia</taxon>
    </lineage>
</organism>
<feature type="chain" id="PRO_0000275847" description="Taurine import ATP-binding protein TauB">
    <location>
        <begin position="1"/>
        <end position="255"/>
    </location>
</feature>
<feature type="domain" description="ABC transporter" evidence="1">
    <location>
        <begin position="2"/>
        <end position="229"/>
    </location>
</feature>
<feature type="binding site" evidence="1">
    <location>
        <begin position="34"/>
        <end position="41"/>
    </location>
    <ligand>
        <name>ATP</name>
        <dbReference type="ChEBI" id="CHEBI:30616"/>
    </ligand>
</feature>
<gene>
    <name evidence="1" type="primary">tauB</name>
    <name type="ordered locus">YPA_3289</name>
</gene>
<name>TAUB_YERPA</name>
<evidence type="ECO:0000255" key="1">
    <source>
        <dbReference type="HAMAP-Rule" id="MF_01714"/>
    </source>
</evidence>
<comment type="function">
    <text evidence="1">Part of the ABC transporter complex TauABC involved in taurine import. Responsible for energy coupling to the transport system.</text>
</comment>
<comment type="catalytic activity">
    <reaction evidence="1">
        <text>taurine(out) + ATP + H2O = taurine(in) + ADP + phosphate + H(+)</text>
        <dbReference type="Rhea" id="RHEA:14613"/>
        <dbReference type="ChEBI" id="CHEBI:15377"/>
        <dbReference type="ChEBI" id="CHEBI:15378"/>
        <dbReference type="ChEBI" id="CHEBI:30616"/>
        <dbReference type="ChEBI" id="CHEBI:43474"/>
        <dbReference type="ChEBI" id="CHEBI:456216"/>
        <dbReference type="ChEBI" id="CHEBI:507393"/>
        <dbReference type="EC" id="7.6.2.7"/>
    </reaction>
</comment>
<comment type="subunit">
    <text evidence="1">The complex is composed of two ATP-binding proteins (TauB), two transmembrane proteins (TauC) and a solute-binding protein (TauA).</text>
</comment>
<comment type="subcellular location">
    <subcellularLocation>
        <location evidence="1">Cell inner membrane</location>
        <topology evidence="1">Peripheral membrane protein</topology>
    </subcellularLocation>
</comment>
<comment type="similarity">
    <text evidence="1">Belongs to the ABC transporter superfamily. Taurine importer (TC 3.A.1.17.1) family.</text>
</comment>